<sequence>MSVSKKDVEYVAELARLEFKEEEKDSFVNDLNKILNYMEKLDELNTDDVDIVVNPYYIENKYREDNVEKSMELKEVIDNAPESLEEYVIVPKVID</sequence>
<gene>
    <name evidence="1" type="primary">gatC</name>
    <name type="ordered locus">CLB_3324</name>
</gene>
<feature type="chain" id="PRO_1000016107" description="Aspartyl/glutamyl-tRNA(Asn/Gln) amidotransferase subunit C">
    <location>
        <begin position="1"/>
        <end position="95"/>
    </location>
</feature>
<comment type="function">
    <text evidence="1">Allows the formation of correctly charged Asn-tRNA(Asn) or Gln-tRNA(Gln) through the transamidation of misacylated Asp-tRNA(Asn) or Glu-tRNA(Gln) in organisms which lack either or both of asparaginyl-tRNA or glutaminyl-tRNA synthetases. The reaction takes place in the presence of glutamine and ATP through an activated phospho-Asp-tRNA(Asn) or phospho-Glu-tRNA(Gln).</text>
</comment>
<comment type="catalytic activity">
    <reaction evidence="1">
        <text>L-glutamyl-tRNA(Gln) + L-glutamine + ATP + H2O = L-glutaminyl-tRNA(Gln) + L-glutamate + ADP + phosphate + H(+)</text>
        <dbReference type="Rhea" id="RHEA:17521"/>
        <dbReference type="Rhea" id="RHEA-COMP:9681"/>
        <dbReference type="Rhea" id="RHEA-COMP:9684"/>
        <dbReference type="ChEBI" id="CHEBI:15377"/>
        <dbReference type="ChEBI" id="CHEBI:15378"/>
        <dbReference type="ChEBI" id="CHEBI:29985"/>
        <dbReference type="ChEBI" id="CHEBI:30616"/>
        <dbReference type="ChEBI" id="CHEBI:43474"/>
        <dbReference type="ChEBI" id="CHEBI:58359"/>
        <dbReference type="ChEBI" id="CHEBI:78520"/>
        <dbReference type="ChEBI" id="CHEBI:78521"/>
        <dbReference type="ChEBI" id="CHEBI:456216"/>
    </reaction>
</comment>
<comment type="catalytic activity">
    <reaction evidence="1">
        <text>L-aspartyl-tRNA(Asn) + L-glutamine + ATP + H2O = L-asparaginyl-tRNA(Asn) + L-glutamate + ADP + phosphate + 2 H(+)</text>
        <dbReference type="Rhea" id="RHEA:14513"/>
        <dbReference type="Rhea" id="RHEA-COMP:9674"/>
        <dbReference type="Rhea" id="RHEA-COMP:9677"/>
        <dbReference type="ChEBI" id="CHEBI:15377"/>
        <dbReference type="ChEBI" id="CHEBI:15378"/>
        <dbReference type="ChEBI" id="CHEBI:29985"/>
        <dbReference type="ChEBI" id="CHEBI:30616"/>
        <dbReference type="ChEBI" id="CHEBI:43474"/>
        <dbReference type="ChEBI" id="CHEBI:58359"/>
        <dbReference type="ChEBI" id="CHEBI:78515"/>
        <dbReference type="ChEBI" id="CHEBI:78516"/>
        <dbReference type="ChEBI" id="CHEBI:456216"/>
    </reaction>
</comment>
<comment type="subunit">
    <text evidence="1">Heterotrimer of A, B and C subunits.</text>
</comment>
<comment type="similarity">
    <text evidence="1">Belongs to the GatC family.</text>
</comment>
<evidence type="ECO:0000255" key="1">
    <source>
        <dbReference type="HAMAP-Rule" id="MF_00122"/>
    </source>
</evidence>
<reference key="1">
    <citation type="journal article" date="2007" name="PLoS ONE">
        <title>Analysis of the neurotoxin complex genes in Clostridium botulinum A1-A4 and B1 strains: BoNT/A3, /Ba4 and /B1 clusters are located within plasmids.</title>
        <authorList>
            <person name="Smith T.J."/>
            <person name="Hill K.K."/>
            <person name="Foley B.T."/>
            <person name="Detter J.C."/>
            <person name="Munk A.C."/>
            <person name="Bruce D.C."/>
            <person name="Doggett N.A."/>
            <person name="Smith L.A."/>
            <person name="Marks J.D."/>
            <person name="Xie G."/>
            <person name="Brettin T.S."/>
        </authorList>
    </citation>
    <scope>NUCLEOTIDE SEQUENCE [LARGE SCALE GENOMIC DNA]</scope>
    <source>
        <strain>ATCC 19397 / Type A</strain>
    </source>
</reference>
<keyword id="KW-0067">ATP-binding</keyword>
<keyword id="KW-0436">Ligase</keyword>
<keyword id="KW-0547">Nucleotide-binding</keyword>
<keyword id="KW-0648">Protein biosynthesis</keyword>
<protein>
    <recommendedName>
        <fullName evidence="1">Aspartyl/glutamyl-tRNA(Asn/Gln) amidotransferase subunit C</fullName>
        <shortName evidence="1">Asp/Glu-ADT subunit C</shortName>
        <ecNumber evidence="1">6.3.5.-</ecNumber>
    </recommendedName>
</protein>
<dbReference type="EC" id="6.3.5.-" evidence="1"/>
<dbReference type="EMBL" id="CP000726">
    <property type="protein sequence ID" value="ABS33286.1"/>
    <property type="molecule type" value="Genomic_DNA"/>
</dbReference>
<dbReference type="RefSeq" id="WP_012048225.1">
    <property type="nucleotide sequence ID" value="NC_009697.1"/>
</dbReference>
<dbReference type="SMR" id="A7FYL4"/>
<dbReference type="GeneID" id="5187522"/>
<dbReference type="KEGG" id="cba:CLB_3324"/>
<dbReference type="HOGENOM" id="CLU_105899_2_1_9"/>
<dbReference type="GO" id="GO:0050566">
    <property type="term" value="F:asparaginyl-tRNA synthase (glutamine-hydrolyzing) activity"/>
    <property type="evidence" value="ECO:0007669"/>
    <property type="project" value="RHEA"/>
</dbReference>
<dbReference type="GO" id="GO:0005524">
    <property type="term" value="F:ATP binding"/>
    <property type="evidence" value="ECO:0007669"/>
    <property type="project" value="UniProtKB-KW"/>
</dbReference>
<dbReference type="GO" id="GO:0050567">
    <property type="term" value="F:glutaminyl-tRNA synthase (glutamine-hydrolyzing) activity"/>
    <property type="evidence" value="ECO:0007669"/>
    <property type="project" value="UniProtKB-UniRule"/>
</dbReference>
<dbReference type="GO" id="GO:0070681">
    <property type="term" value="P:glutaminyl-tRNAGln biosynthesis via transamidation"/>
    <property type="evidence" value="ECO:0007669"/>
    <property type="project" value="TreeGrafter"/>
</dbReference>
<dbReference type="GO" id="GO:0006450">
    <property type="term" value="P:regulation of translational fidelity"/>
    <property type="evidence" value="ECO:0007669"/>
    <property type="project" value="InterPro"/>
</dbReference>
<dbReference type="GO" id="GO:0006412">
    <property type="term" value="P:translation"/>
    <property type="evidence" value="ECO:0007669"/>
    <property type="project" value="UniProtKB-UniRule"/>
</dbReference>
<dbReference type="Gene3D" id="1.10.20.60">
    <property type="entry name" value="Glu-tRNAGln amidotransferase C subunit, N-terminal domain"/>
    <property type="match status" value="1"/>
</dbReference>
<dbReference type="HAMAP" id="MF_00122">
    <property type="entry name" value="GatC"/>
    <property type="match status" value="1"/>
</dbReference>
<dbReference type="InterPro" id="IPR036113">
    <property type="entry name" value="Asp/Glu-ADT_sf_sub_c"/>
</dbReference>
<dbReference type="InterPro" id="IPR003837">
    <property type="entry name" value="GatC"/>
</dbReference>
<dbReference type="NCBIfam" id="TIGR00135">
    <property type="entry name" value="gatC"/>
    <property type="match status" value="1"/>
</dbReference>
<dbReference type="PANTHER" id="PTHR15004">
    <property type="entry name" value="GLUTAMYL-TRNA(GLN) AMIDOTRANSFERASE SUBUNIT C, MITOCHONDRIAL"/>
    <property type="match status" value="1"/>
</dbReference>
<dbReference type="PANTHER" id="PTHR15004:SF0">
    <property type="entry name" value="GLUTAMYL-TRNA(GLN) AMIDOTRANSFERASE SUBUNIT C, MITOCHONDRIAL"/>
    <property type="match status" value="1"/>
</dbReference>
<dbReference type="Pfam" id="PF02686">
    <property type="entry name" value="GatC"/>
    <property type="match status" value="1"/>
</dbReference>
<dbReference type="SUPFAM" id="SSF141000">
    <property type="entry name" value="Glu-tRNAGln amidotransferase C subunit"/>
    <property type="match status" value="1"/>
</dbReference>
<organism>
    <name type="scientific">Clostridium botulinum (strain ATCC 19397 / Type A)</name>
    <dbReference type="NCBI Taxonomy" id="441770"/>
    <lineage>
        <taxon>Bacteria</taxon>
        <taxon>Bacillati</taxon>
        <taxon>Bacillota</taxon>
        <taxon>Clostridia</taxon>
        <taxon>Eubacteriales</taxon>
        <taxon>Clostridiaceae</taxon>
        <taxon>Clostridium</taxon>
    </lineage>
</organism>
<proteinExistence type="inferred from homology"/>
<name>GATC_CLOB1</name>
<accession>A7FYL4</accession>